<organism>
    <name type="scientific">Arabidopsis thaliana</name>
    <name type="common">Mouse-ear cress</name>
    <dbReference type="NCBI Taxonomy" id="3702"/>
    <lineage>
        <taxon>Eukaryota</taxon>
        <taxon>Viridiplantae</taxon>
        <taxon>Streptophyta</taxon>
        <taxon>Embryophyta</taxon>
        <taxon>Tracheophyta</taxon>
        <taxon>Spermatophyta</taxon>
        <taxon>Magnoliopsida</taxon>
        <taxon>eudicotyledons</taxon>
        <taxon>Gunneridae</taxon>
        <taxon>Pentapetalae</taxon>
        <taxon>rosids</taxon>
        <taxon>malvids</taxon>
        <taxon>Brassicales</taxon>
        <taxon>Brassicaceae</taxon>
        <taxon>Camelineae</taxon>
        <taxon>Arabidopsis</taxon>
    </lineage>
</organism>
<protein>
    <recommendedName>
        <fullName>Uricase</fullName>
        <ecNumber>1.7.3.3</ecNumber>
    </recommendedName>
    <alternativeName>
        <fullName>Nodulin-35 homolog</fullName>
    </alternativeName>
    <alternativeName>
        <fullName>Urate oxidase</fullName>
    </alternativeName>
</protein>
<evidence type="ECO:0000250" key="1">
    <source>
        <dbReference type="UniProtKB" id="D0VWQ1"/>
    </source>
</evidence>
<evidence type="ECO:0000250" key="2">
    <source>
        <dbReference type="UniProtKB" id="Q00511"/>
    </source>
</evidence>
<evidence type="ECO:0000255" key="3"/>
<evidence type="ECO:0000305" key="4"/>
<evidence type="ECO:0007744" key="5">
    <source>
    </source>
</evidence>
<proteinExistence type="evidence at protein level"/>
<comment type="function">
    <text>Catalyzes the oxidation of uric acid to 5-hydroxyisourate, which is further processed to form (S)-allantoin.</text>
</comment>
<comment type="catalytic activity">
    <reaction>
        <text>urate + O2 + H2O = 5-hydroxyisourate + H2O2</text>
        <dbReference type="Rhea" id="RHEA:21368"/>
        <dbReference type="ChEBI" id="CHEBI:15377"/>
        <dbReference type="ChEBI" id="CHEBI:15379"/>
        <dbReference type="ChEBI" id="CHEBI:16240"/>
        <dbReference type="ChEBI" id="CHEBI:17775"/>
        <dbReference type="ChEBI" id="CHEBI:18072"/>
        <dbReference type="EC" id="1.7.3.3"/>
    </reaction>
</comment>
<comment type="pathway">
    <text>Purine metabolism; urate degradation; (S)-allantoin from urate: step 1/3.</text>
</comment>
<comment type="subcellular location">
    <subcellularLocation>
        <location evidence="4">Peroxisome</location>
    </subcellularLocation>
</comment>
<comment type="similarity">
    <text evidence="4">Belongs to the uricase family.</text>
</comment>
<gene>
    <name type="ordered locus">At2g26230</name>
    <name type="ORF">T1D16.13</name>
</gene>
<sequence>MAQEADGIRLDQRHGKARVRVGRVWRHAHDGSHHFVEWNVSISLLSHCLSSYRLDDNSDIVATDTIKNTVYVKAKECGDRLSVEEFAILIGKHFCSFYPQVFTAIVNIIEKPWERVSIDGKPHLHGFKLGSENHTTEARVEKSGALNLTSGIGGLALLKTTQSGFERFVRDKYTILPETRERMLATEVNASWRYSYESVASIPTKGLYFSEKFMDVKKVLMDTFFGPPETGVYSPSVQRTLYLMGSAVLKRFADVSSIHLKMPNIHFLPVNLSTKENPSMVKFKDDVYLPTDEPHGSIEATLSRITSKL</sequence>
<name>URIC_ARATH</name>
<keyword id="KW-0007">Acetylation</keyword>
<keyword id="KW-0560">Oxidoreductase</keyword>
<keyword id="KW-0576">Peroxisome</keyword>
<keyword id="KW-0659">Purine metabolism</keyword>
<keyword id="KW-1185">Reference proteome</keyword>
<dbReference type="EC" id="1.7.3.3"/>
<dbReference type="EMBL" id="Y11120">
    <property type="protein sequence ID" value="CAA72005.1"/>
    <property type="molecule type" value="mRNA"/>
</dbReference>
<dbReference type="EMBL" id="AC004484">
    <property type="protein sequence ID" value="AAC14527.1"/>
    <property type="molecule type" value="Genomic_DNA"/>
</dbReference>
<dbReference type="EMBL" id="CP002685">
    <property type="protein sequence ID" value="AEC07811.1"/>
    <property type="molecule type" value="Genomic_DNA"/>
</dbReference>
<dbReference type="EMBL" id="AY050318">
    <property type="protein sequence ID" value="AAK91335.1"/>
    <property type="molecule type" value="mRNA"/>
</dbReference>
<dbReference type="EMBL" id="AY101530">
    <property type="protein sequence ID" value="AAM26651.1"/>
    <property type="molecule type" value="mRNA"/>
</dbReference>
<dbReference type="EMBL" id="AY087805">
    <property type="protein sequence ID" value="AAM65341.1"/>
    <property type="molecule type" value="mRNA"/>
</dbReference>
<dbReference type="PIR" id="H84657">
    <property type="entry name" value="H84657"/>
</dbReference>
<dbReference type="RefSeq" id="NP_180191.1">
    <property type="nucleotide sequence ID" value="NM_128180.5"/>
</dbReference>
<dbReference type="SMR" id="O04420"/>
<dbReference type="BioGRID" id="2515">
    <property type="interactions" value="2"/>
</dbReference>
<dbReference type="FunCoup" id="O04420">
    <property type="interactions" value="1309"/>
</dbReference>
<dbReference type="STRING" id="3702.O04420"/>
<dbReference type="iPTMnet" id="O04420"/>
<dbReference type="PaxDb" id="3702-AT2G26230.1"/>
<dbReference type="ProteomicsDB" id="228570"/>
<dbReference type="EnsemblPlants" id="AT2G26230.1">
    <property type="protein sequence ID" value="AT2G26230.1"/>
    <property type="gene ID" value="AT2G26230"/>
</dbReference>
<dbReference type="GeneID" id="817163"/>
<dbReference type="Gramene" id="AT2G26230.1">
    <property type="protein sequence ID" value="AT2G26230.1"/>
    <property type="gene ID" value="AT2G26230"/>
</dbReference>
<dbReference type="KEGG" id="ath:AT2G26230"/>
<dbReference type="Araport" id="AT2G26230"/>
<dbReference type="TAIR" id="AT2G26230">
    <property type="gene designation" value="UOX"/>
</dbReference>
<dbReference type="eggNOG" id="KOG1599">
    <property type="taxonomic scope" value="Eukaryota"/>
</dbReference>
<dbReference type="HOGENOM" id="CLU_048151_1_1_1"/>
<dbReference type="InParanoid" id="O04420"/>
<dbReference type="OMA" id="ATMYKMS"/>
<dbReference type="PhylomeDB" id="O04420"/>
<dbReference type="BioCyc" id="ARA:AT2G26230-MONOMER"/>
<dbReference type="UniPathway" id="UPA00394">
    <property type="reaction ID" value="UER00650"/>
</dbReference>
<dbReference type="PRO" id="PR:O04420"/>
<dbReference type="Proteomes" id="UP000006548">
    <property type="component" value="Chromosome 2"/>
</dbReference>
<dbReference type="ExpressionAtlas" id="O04420">
    <property type="expression patterns" value="baseline and differential"/>
</dbReference>
<dbReference type="GO" id="GO:0005829">
    <property type="term" value="C:cytosol"/>
    <property type="evidence" value="ECO:0007005"/>
    <property type="project" value="TAIR"/>
</dbReference>
<dbReference type="GO" id="GO:0005777">
    <property type="term" value="C:peroxisome"/>
    <property type="evidence" value="ECO:0007005"/>
    <property type="project" value="TAIR"/>
</dbReference>
<dbReference type="GO" id="GO:0004846">
    <property type="term" value="F:urate oxidase activity"/>
    <property type="evidence" value="ECO:0000315"/>
    <property type="project" value="TAIR"/>
</dbReference>
<dbReference type="GO" id="GO:0007031">
    <property type="term" value="P:peroxisome organization"/>
    <property type="evidence" value="ECO:0000315"/>
    <property type="project" value="TAIR"/>
</dbReference>
<dbReference type="GO" id="GO:0006144">
    <property type="term" value="P:purine nucleobase metabolic process"/>
    <property type="evidence" value="ECO:0007669"/>
    <property type="project" value="UniProtKB-KW"/>
</dbReference>
<dbReference type="GO" id="GO:0019628">
    <property type="term" value="P:urate catabolic process"/>
    <property type="evidence" value="ECO:0007669"/>
    <property type="project" value="UniProtKB-UniPathway"/>
</dbReference>
<dbReference type="CDD" id="cd00445">
    <property type="entry name" value="Uricase"/>
    <property type="match status" value="1"/>
</dbReference>
<dbReference type="FunFam" id="3.10.270.10:FF:000001">
    <property type="entry name" value="Uricase"/>
    <property type="match status" value="1"/>
</dbReference>
<dbReference type="Gene3D" id="3.10.270.10">
    <property type="entry name" value="Urate Oxidase"/>
    <property type="match status" value="1"/>
</dbReference>
<dbReference type="InterPro" id="IPR002042">
    <property type="entry name" value="Uricase"/>
</dbReference>
<dbReference type="InterPro" id="IPR019842">
    <property type="entry name" value="Uricase_CS"/>
</dbReference>
<dbReference type="NCBIfam" id="TIGR03383">
    <property type="entry name" value="urate_oxi"/>
    <property type="match status" value="1"/>
</dbReference>
<dbReference type="PANTHER" id="PTHR42874">
    <property type="entry name" value="URICASE"/>
    <property type="match status" value="1"/>
</dbReference>
<dbReference type="PANTHER" id="PTHR42874:SF1">
    <property type="entry name" value="URICASE"/>
    <property type="match status" value="1"/>
</dbReference>
<dbReference type="Pfam" id="PF01014">
    <property type="entry name" value="Uricase"/>
    <property type="match status" value="2"/>
</dbReference>
<dbReference type="PIRSF" id="PIRSF000241">
    <property type="entry name" value="Urate_oxidase"/>
    <property type="match status" value="1"/>
</dbReference>
<dbReference type="PRINTS" id="PR00093">
    <property type="entry name" value="URICASE"/>
</dbReference>
<dbReference type="SUPFAM" id="SSF55620">
    <property type="entry name" value="Tetrahydrobiopterin biosynthesis enzymes-like"/>
    <property type="match status" value="2"/>
</dbReference>
<dbReference type="PROSITE" id="PS00366">
    <property type="entry name" value="URICASE"/>
    <property type="match status" value="1"/>
</dbReference>
<reference key="1">
    <citation type="journal article" date="1997" name="Trends Plant Sci.">
        <title>A nodulin-35 homologue is encoded in the Arabidopsis genome.</title>
        <authorList>
            <person name="Marchfelder A."/>
            <person name="Binder S."/>
            <person name="Brennicke A."/>
        </authorList>
    </citation>
    <scope>NUCLEOTIDE SEQUENCE [MRNA]</scope>
    <source>
        <strain>cv. Landsberg erecta</strain>
    </source>
</reference>
<reference key="2">
    <citation type="journal article" date="1999" name="Nature">
        <title>Sequence and analysis of chromosome 2 of the plant Arabidopsis thaliana.</title>
        <authorList>
            <person name="Lin X."/>
            <person name="Kaul S."/>
            <person name="Rounsley S.D."/>
            <person name="Shea T.P."/>
            <person name="Benito M.-I."/>
            <person name="Town C.D."/>
            <person name="Fujii C.Y."/>
            <person name="Mason T.M."/>
            <person name="Bowman C.L."/>
            <person name="Barnstead M.E."/>
            <person name="Feldblyum T.V."/>
            <person name="Buell C.R."/>
            <person name="Ketchum K.A."/>
            <person name="Lee J.J."/>
            <person name="Ronning C.M."/>
            <person name="Koo H.L."/>
            <person name="Moffat K.S."/>
            <person name="Cronin L.A."/>
            <person name="Shen M."/>
            <person name="Pai G."/>
            <person name="Van Aken S."/>
            <person name="Umayam L."/>
            <person name="Tallon L.J."/>
            <person name="Gill J.E."/>
            <person name="Adams M.D."/>
            <person name="Carrera A.J."/>
            <person name="Creasy T.H."/>
            <person name="Goodman H.M."/>
            <person name="Somerville C.R."/>
            <person name="Copenhaver G.P."/>
            <person name="Preuss D."/>
            <person name="Nierman W.C."/>
            <person name="White O."/>
            <person name="Eisen J.A."/>
            <person name="Salzberg S.L."/>
            <person name="Fraser C.M."/>
            <person name="Venter J.C."/>
        </authorList>
    </citation>
    <scope>NUCLEOTIDE SEQUENCE [LARGE SCALE GENOMIC DNA]</scope>
    <source>
        <strain>cv. Columbia</strain>
    </source>
</reference>
<reference key="3">
    <citation type="journal article" date="2017" name="Plant J.">
        <title>Araport11: a complete reannotation of the Arabidopsis thaliana reference genome.</title>
        <authorList>
            <person name="Cheng C.Y."/>
            <person name="Krishnakumar V."/>
            <person name="Chan A.P."/>
            <person name="Thibaud-Nissen F."/>
            <person name="Schobel S."/>
            <person name="Town C.D."/>
        </authorList>
    </citation>
    <scope>GENOME REANNOTATION</scope>
    <source>
        <strain>cv. Columbia</strain>
    </source>
</reference>
<reference key="4">
    <citation type="journal article" date="2003" name="Science">
        <title>Empirical analysis of transcriptional activity in the Arabidopsis genome.</title>
        <authorList>
            <person name="Yamada K."/>
            <person name="Lim J."/>
            <person name="Dale J.M."/>
            <person name="Chen H."/>
            <person name="Shinn P."/>
            <person name="Palm C.J."/>
            <person name="Southwick A.M."/>
            <person name="Wu H.C."/>
            <person name="Kim C.J."/>
            <person name="Nguyen M."/>
            <person name="Pham P.K."/>
            <person name="Cheuk R.F."/>
            <person name="Karlin-Newmann G."/>
            <person name="Liu S.X."/>
            <person name="Lam B."/>
            <person name="Sakano H."/>
            <person name="Wu T."/>
            <person name="Yu G."/>
            <person name="Miranda M."/>
            <person name="Quach H.L."/>
            <person name="Tripp M."/>
            <person name="Chang C.H."/>
            <person name="Lee J.M."/>
            <person name="Toriumi M.J."/>
            <person name="Chan M.M."/>
            <person name="Tang C.C."/>
            <person name="Onodera C.S."/>
            <person name="Deng J.M."/>
            <person name="Akiyama K."/>
            <person name="Ansari Y."/>
            <person name="Arakawa T."/>
            <person name="Banh J."/>
            <person name="Banno F."/>
            <person name="Bowser L."/>
            <person name="Brooks S.Y."/>
            <person name="Carninci P."/>
            <person name="Chao Q."/>
            <person name="Choy N."/>
            <person name="Enju A."/>
            <person name="Goldsmith A.D."/>
            <person name="Gurjal M."/>
            <person name="Hansen N.F."/>
            <person name="Hayashizaki Y."/>
            <person name="Johnson-Hopson C."/>
            <person name="Hsuan V.W."/>
            <person name="Iida K."/>
            <person name="Karnes M."/>
            <person name="Khan S."/>
            <person name="Koesema E."/>
            <person name="Ishida J."/>
            <person name="Jiang P.X."/>
            <person name="Jones T."/>
            <person name="Kawai J."/>
            <person name="Kamiya A."/>
            <person name="Meyers C."/>
            <person name="Nakajima M."/>
            <person name="Narusaka M."/>
            <person name="Seki M."/>
            <person name="Sakurai T."/>
            <person name="Satou M."/>
            <person name="Tamse R."/>
            <person name="Vaysberg M."/>
            <person name="Wallender E.K."/>
            <person name="Wong C."/>
            <person name="Yamamura Y."/>
            <person name="Yuan S."/>
            <person name="Shinozaki K."/>
            <person name="Davis R.W."/>
            <person name="Theologis A."/>
            <person name="Ecker J.R."/>
        </authorList>
    </citation>
    <scope>NUCLEOTIDE SEQUENCE [LARGE SCALE MRNA]</scope>
    <source>
        <strain>cv. Columbia</strain>
    </source>
</reference>
<reference key="5">
    <citation type="submission" date="2002-03" db="EMBL/GenBank/DDBJ databases">
        <title>Full-length cDNA from Arabidopsis thaliana.</title>
        <authorList>
            <person name="Brover V.V."/>
            <person name="Troukhan M.E."/>
            <person name="Alexandrov N.A."/>
            <person name="Lu Y.-P."/>
            <person name="Flavell R.B."/>
            <person name="Feldmann K.A."/>
        </authorList>
    </citation>
    <scope>NUCLEOTIDE SEQUENCE [LARGE SCALE MRNA]</scope>
</reference>
<reference key="6">
    <citation type="journal article" date="2007" name="Plant Cell">
        <title>Proteome analysis of Arabidopsis leaf peroxisomes reveals novel targeting peptides, metabolic pathways, and defense mechanisms.</title>
        <authorList>
            <person name="Reumann S."/>
            <person name="Babujee L."/>
            <person name="Ma C."/>
            <person name="Wienkoop S."/>
            <person name="Siemsen T."/>
            <person name="Antonicelli G.E."/>
            <person name="Rasche N."/>
            <person name="Lueder F."/>
            <person name="Weckwerth W."/>
            <person name="Jahn O."/>
        </authorList>
    </citation>
    <scope>IDENTIFICATION BY MASS SPECTROMETRY</scope>
</reference>
<reference key="7">
    <citation type="journal article" date="2012" name="Mol. Cell. Proteomics">
        <title>Comparative large-scale characterisation of plant vs. mammal proteins reveals similar and idiosyncratic N-alpha acetylation features.</title>
        <authorList>
            <person name="Bienvenut W.V."/>
            <person name="Sumpton D."/>
            <person name="Martinez A."/>
            <person name="Lilla S."/>
            <person name="Espagne C."/>
            <person name="Meinnel T."/>
            <person name="Giglione C."/>
        </authorList>
    </citation>
    <scope>ACETYLATION [LARGE SCALE ANALYSIS] AT ALA-2</scope>
    <scope>CLEAVAGE OF INITIATOR METHIONINE [LARGE SCALE ANALYSIS]</scope>
    <scope>IDENTIFICATION BY MASS SPECTROMETRY [LARGE SCALE ANALYSIS]</scope>
</reference>
<accession>O04420</accession>
<accession>O64848</accession>
<accession>Q94A71</accession>
<feature type="initiator methionine" description="Removed" evidence="5">
    <location>
        <position position="1"/>
    </location>
</feature>
<feature type="chain" id="PRO_0000165999" description="Uricase">
    <location>
        <begin position="2"/>
        <end position="309"/>
    </location>
</feature>
<feature type="short sequence motif" description="Microbody targeting signal" evidence="3">
    <location>
        <begin position="307"/>
        <end position="309"/>
    </location>
</feature>
<feature type="active site" description="Charge relay system" evidence="1">
    <location>
        <position position="16"/>
    </location>
</feature>
<feature type="active site" description="Charge relay system" evidence="1">
    <location>
        <position position="63"/>
    </location>
</feature>
<feature type="active site" description="Charge relay system" evidence="1">
    <location>
        <position position="266"/>
    </location>
</feature>
<feature type="binding site" evidence="2">
    <location>
        <position position="63"/>
    </location>
    <ligand>
        <name>urate</name>
        <dbReference type="ChEBI" id="CHEBI:17775"/>
    </ligand>
</feature>
<feature type="binding site" evidence="2">
    <location>
        <position position="64"/>
    </location>
    <ligand>
        <name>urate</name>
        <dbReference type="ChEBI" id="CHEBI:17775"/>
    </ligand>
</feature>
<feature type="binding site" evidence="2">
    <location>
        <position position="165"/>
    </location>
    <ligand>
        <name>urate</name>
        <dbReference type="ChEBI" id="CHEBI:17775"/>
    </ligand>
</feature>
<feature type="binding site" evidence="2">
    <location>
        <position position="182"/>
    </location>
    <ligand>
        <name>urate</name>
        <dbReference type="ChEBI" id="CHEBI:17775"/>
    </ligand>
</feature>
<feature type="binding site" evidence="2">
    <location>
        <position position="237"/>
    </location>
    <ligand>
        <name>urate</name>
        <dbReference type="ChEBI" id="CHEBI:17775"/>
    </ligand>
</feature>
<feature type="binding site" evidence="2">
    <location>
        <position position="238"/>
    </location>
    <ligand>
        <name>urate</name>
        <dbReference type="ChEBI" id="CHEBI:17775"/>
    </ligand>
</feature>
<feature type="binding site" evidence="2">
    <location>
        <position position="264"/>
    </location>
    <ligand>
        <name>urate</name>
        <dbReference type="ChEBI" id="CHEBI:17775"/>
    </ligand>
</feature>
<feature type="modified residue" description="N-acetylalanine" evidence="5">
    <location>
        <position position="2"/>
    </location>
</feature>
<feature type="sequence conflict" description="In Ref. 1; CAA72005." evidence="4" ref="1">
    <original>D</original>
    <variation>E</variation>
    <location>
        <position position="11"/>
    </location>
</feature>